<accession>A7IHP6</accession>
<feature type="chain" id="PRO_1000100982" description="ATP-dependent protease ATPase subunit HslU">
    <location>
        <begin position="1"/>
        <end position="435"/>
    </location>
</feature>
<feature type="binding site" evidence="1">
    <location>
        <position position="18"/>
    </location>
    <ligand>
        <name>ATP</name>
        <dbReference type="ChEBI" id="CHEBI:30616"/>
    </ligand>
</feature>
<feature type="binding site" evidence="1">
    <location>
        <begin position="60"/>
        <end position="65"/>
    </location>
    <ligand>
        <name>ATP</name>
        <dbReference type="ChEBI" id="CHEBI:30616"/>
    </ligand>
</feature>
<feature type="binding site" evidence="1">
    <location>
        <position position="248"/>
    </location>
    <ligand>
        <name>ATP</name>
        <dbReference type="ChEBI" id="CHEBI:30616"/>
    </ligand>
</feature>
<feature type="binding site" evidence="1">
    <location>
        <position position="313"/>
    </location>
    <ligand>
        <name>ATP</name>
        <dbReference type="ChEBI" id="CHEBI:30616"/>
    </ligand>
</feature>
<feature type="binding site" evidence="1">
    <location>
        <position position="385"/>
    </location>
    <ligand>
        <name>ATP</name>
        <dbReference type="ChEBI" id="CHEBI:30616"/>
    </ligand>
</feature>
<sequence length="435" mass="47464">MSDFSPREIVSELDRHIVGQANAKRAVAIALRNRWRRQQLDDKLREEVLPKNILMIGPTGVGKTEISRRLARLAGAPFLKVEATKFTEVGYVGRDVEQIVRDLVEVGIGLVREARRKDVQAKAHLAAENRVLDALVGATASPATRDAFRKRLRAGELDDKEVEIEVQAGGQGMPMFEIPGMPGTQMGAVNLGDMLGKAFGGRSKPRRVNVKEAHPLLLAEEADKLIDQDAIVQDAIHQVENNGIVFLDEIDKIAGREGRSGADVSREGVQRDLLPLIEGTTVSTKHGPVKTDHILFIASGAFHVSKPSDLLPELQGRLPIRVELEALTRADFVRILTETEASLVKQSVALMGTEGVTLTITTDAVEAIADAAVEVNSNVENIGARRLQTVIERVLDDLSFSAPDRSGETVVVDAEYVRSRVADLARNADLSRFIL</sequence>
<protein>
    <recommendedName>
        <fullName evidence="1">ATP-dependent protease ATPase subunit HslU</fullName>
    </recommendedName>
    <alternativeName>
        <fullName evidence="1">Unfoldase HslU</fullName>
    </alternativeName>
</protein>
<dbReference type="EMBL" id="CP000781">
    <property type="protein sequence ID" value="ABS67539.1"/>
    <property type="molecule type" value="Genomic_DNA"/>
</dbReference>
<dbReference type="SMR" id="A7IHP6"/>
<dbReference type="STRING" id="78245.Xaut_2296"/>
<dbReference type="KEGG" id="xau:Xaut_2296"/>
<dbReference type="eggNOG" id="COG1220">
    <property type="taxonomic scope" value="Bacteria"/>
</dbReference>
<dbReference type="HOGENOM" id="CLU_033123_0_0_5"/>
<dbReference type="OrthoDB" id="9804062at2"/>
<dbReference type="PhylomeDB" id="A7IHP6"/>
<dbReference type="Proteomes" id="UP000002417">
    <property type="component" value="Chromosome"/>
</dbReference>
<dbReference type="GO" id="GO:0009376">
    <property type="term" value="C:HslUV protease complex"/>
    <property type="evidence" value="ECO:0007669"/>
    <property type="project" value="UniProtKB-UniRule"/>
</dbReference>
<dbReference type="GO" id="GO:0005524">
    <property type="term" value="F:ATP binding"/>
    <property type="evidence" value="ECO:0007669"/>
    <property type="project" value="UniProtKB-UniRule"/>
</dbReference>
<dbReference type="GO" id="GO:0016887">
    <property type="term" value="F:ATP hydrolysis activity"/>
    <property type="evidence" value="ECO:0007669"/>
    <property type="project" value="InterPro"/>
</dbReference>
<dbReference type="GO" id="GO:0008233">
    <property type="term" value="F:peptidase activity"/>
    <property type="evidence" value="ECO:0007669"/>
    <property type="project" value="InterPro"/>
</dbReference>
<dbReference type="GO" id="GO:0036402">
    <property type="term" value="F:proteasome-activating activity"/>
    <property type="evidence" value="ECO:0007669"/>
    <property type="project" value="UniProtKB-UniRule"/>
</dbReference>
<dbReference type="GO" id="GO:0043335">
    <property type="term" value="P:protein unfolding"/>
    <property type="evidence" value="ECO:0007669"/>
    <property type="project" value="UniProtKB-UniRule"/>
</dbReference>
<dbReference type="GO" id="GO:0051603">
    <property type="term" value="P:proteolysis involved in protein catabolic process"/>
    <property type="evidence" value="ECO:0007669"/>
    <property type="project" value="TreeGrafter"/>
</dbReference>
<dbReference type="CDD" id="cd19498">
    <property type="entry name" value="RecA-like_HslU"/>
    <property type="match status" value="1"/>
</dbReference>
<dbReference type="FunFam" id="3.40.50.300:FF:000213">
    <property type="entry name" value="ATP-dependent protease ATPase subunit HslU"/>
    <property type="match status" value="1"/>
</dbReference>
<dbReference type="FunFam" id="3.40.50.300:FF:000220">
    <property type="entry name" value="ATP-dependent protease ATPase subunit HslU"/>
    <property type="match status" value="1"/>
</dbReference>
<dbReference type="Gene3D" id="1.10.8.60">
    <property type="match status" value="1"/>
</dbReference>
<dbReference type="Gene3D" id="1.10.8.10">
    <property type="entry name" value="DNA helicase RuvA subunit, C-terminal domain"/>
    <property type="match status" value="1"/>
</dbReference>
<dbReference type="Gene3D" id="3.40.50.300">
    <property type="entry name" value="P-loop containing nucleotide triphosphate hydrolases"/>
    <property type="match status" value="2"/>
</dbReference>
<dbReference type="HAMAP" id="MF_00249">
    <property type="entry name" value="HslU"/>
    <property type="match status" value="1"/>
</dbReference>
<dbReference type="InterPro" id="IPR003593">
    <property type="entry name" value="AAA+_ATPase"/>
</dbReference>
<dbReference type="InterPro" id="IPR050052">
    <property type="entry name" value="ATP-dep_Clp_protease_ClpX"/>
</dbReference>
<dbReference type="InterPro" id="IPR003959">
    <property type="entry name" value="ATPase_AAA_core"/>
</dbReference>
<dbReference type="InterPro" id="IPR019489">
    <property type="entry name" value="Clp_ATPase_C"/>
</dbReference>
<dbReference type="InterPro" id="IPR004491">
    <property type="entry name" value="HslU"/>
</dbReference>
<dbReference type="InterPro" id="IPR027417">
    <property type="entry name" value="P-loop_NTPase"/>
</dbReference>
<dbReference type="NCBIfam" id="TIGR00390">
    <property type="entry name" value="hslU"/>
    <property type="match status" value="1"/>
</dbReference>
<dbReference type="NCBIfam" id="NF003544">
    <property type="entry name" value="PRK05201.1"/>
    <property type="match status" value="1"/>
</dbReference>
<dbReference type="PANTHER" id="PTHR48102">
    <property type="entry name" value="ATP-DEPENDENT CLP PROTEASE ATP-BINDING SUBUNIT CLPX-LIKE, MITOCHONDRIAL-RELATED"/>
    <property type="match status" value="1"/>
</dbReference>
<dbReference type="PANTHER" id="PTHR48102:SF3">
    <property type="entry name" value="ATP-DEPENDENT PROTEASE ATPASE SUBUNIT HSLU"/>
    <property type="match status" value="1"/>
</dbReference>
<dbReference type="Pfam" id="PF00004">
    <property type="entry name" value="AAA"/>
    <property type="match status" value="1"/>
</dbReference>
<dbReference type="Pfam" id="PF07724">
    <property type="entry name" value="AAA_2"/>
    <property type="match status" value="1"/>
</dbReference>
<dbReference type="SMART" id="SM00382">
    <property type="entry name" value="AAA"/>
    <property type="match status" value="1"/>
</dbReference>
<dbReference type="SMART" id="SM01086">
    <property type="entry name" value="ClpB_D2-small"/>
    <property type="match status" value="1"/>
</dbReference>
<dbReference type="SUPFAM" id="SSF52540">
    <property type="entry name" value="P-loop containing nucleoside triphosphate hydrolases"/>
    <property type="match status" value="1"/>
</dbReference>
<comment type="function">
    <text evidence="1">ATPase subunit of a proteasome-like degradation complex; this subunit has chaperone activity. The binding of ATP and its subsequent hydrolysis by HslU are essential for unfolding of protein substrates subsequently hydrolyzed by HslV. HslU recognizes the N-terminal part of its protein substrates and unfolds these before they are guided to HslV for hydrolysis.</text>
</comment>
<comment type="subunit">
    <text evidence="1">A double ring-shaped homohexamer of HslV is capped on each side by a ring-shaped HslU homohexamer. The assembly of the HslU/HslV complex is dependent on binding of ATP.</text>
</comment>
<comment type="subcellular location">
    <subcellularLocation>
        <location evidence="1">Cytoplasm</location>
    </subcellularLocation>
</comment>
<comment type="similarity">
    <text evidence="1">Belongs to the ClpX chaperone family. HslU subfamily.</text>
</comment>
<evidence type="ECO:0000255" key="1">
    <source>
        <dbReference type="HAMAP-Rule" id="MF_00249"/>
    </source>
</evidence>
<organism>
    <name type="scientific">Xanthobacter autotrophicus (strain ATCC BAA-1158 / Py2)</name>
    <dbReference type="NCBI Taxonomy" id="78245"/>
    <lineage>
        <taxon>Bacteria</taxon>
        <taxon>Pseudomonadati</taxon>
        <taxon>Pseudomonadota</taxon>
        <taxon>Alphaproteobacteria</taxon>
        <taxon>Hyphomicrobiales</taxon>
        <taxon>Xanthobacteraceae</taxon>
        <taxon>Xanthobacter</taxon>
    </lineage>
</organism>
<keyword id="KW-0067">ATP-binding</keyword>
<keyword id="KW-0143">Chaperone</keyword>
<keyword id="KW-0963">Cytoplasm</keyword>
<keyword id="KW-0547">Nucleotide-binding</keyword>
<keyword id="KW-1185">Reference proteome</keyword>
<keyword id="KW-0346">Stress response</keyword>
<proteinExistence type="inferred from homology"/>
<name>HSLU_XANP2</name>
<gene>
    <name evidence="1" type="primary">hslU</name>
    <name type="ordered locus">Xaut_2296</name>
</gene>
<reference key="1">
    <citation type="submission" date="2007-07" db="EMBL/GenBank/DDBJ databases">
        <title>Complete sequence of chromosome of Xanthobacter autotrophicus Py2.</title>
        <authorList>
            <consortium name="US DOE Joint Genome Institute"/>
            <person name="Copeland A."/>
            <person name="Lucas S."/>
            <person name="Lapidus A."/>
            <person name="Barry K."/>
            <person name="Glavina del Rio T."/>
            <person name="Hammon N."/>
            <person name="Israni S."/>
            <person name="Dalin E."/>
            <person name="Tice H."/>
            <person name="Pitluck S."/>
            <person name="Sims D."/>
            <person name="Brettin T."/>
            <person name="Bruce D."/>
            <person name="Detter J.C."/>
            <person name="Han C."/>
            <person name="Tapia R."/>
            <person name="Brainard J."/>
            <person name="Schmutz J."/>
            <person name="Larimer F."/>
            <person name="Land M."/>
            <person name="Hauser L."/>
            <person name="Kyrpides N."/>
            <person name="Kim E."/>
            <person name="Ensigns S.A."/>
            <person name="Richardson P."/>
        </authorList>
    </citation>
    <scope>NUCLEOTIDE SEQUENCE [LARGE SCALE GENOMIC DNA]</scope>
    <source>
        <strain>ATCC BAA-1158 / Py2</strain>
    </source>
</reference>